<protein>
    <recommendedName>
        <fullName evidence="1">UPF0227 protein YcfP</fullName>
    </recommendedName>
</protein>
<accession>A9N5J5</accession>
<reference key="1">
    <citation type="submission" date="2007-11" db="EMBL/GenBank/DDBJ databases">
        <authorList>
            <consortium name="The Salmonella enterica serovar Paratyphi B Genome Sequencing Project"/>
            <person name="McClelland M."/>
            <person name="Sanderson E.K."/>
            <person name="Porwollik S."/>
            <person name="Spieth J."/>
            <person name="Clifton W.S."/>
            <person name="Fulton R."/>
            <person name="Cordes M."/>
            <person name="Wollam A."/>
            <person name="Shah N."/>
            <person name="Pepin K."/>
            <person name="Bhonagiri V."/>
            <person name="Nash W."/>
            <person name="Johnson M."/>
            <person name="Thiruvilangam P."/>
            <person name="Wilson R."/>
        </authorList>
    </citation>
    <scope>NUCLEOTIDE SEQUENCE [LARGE SCALE GENOMIC DNA]</scope>
    <source>
        <strain>ATCC BAA-1250 / SPB7</strain>
    </source>
</reference>
<sequence length="180" mass="21093">MIIYLHGFDSNSPGNHEKVLQLQFIDPDVRLVSYSTRHPKHDMQHLLKEVDKMLQLNVDERPLICGVGLGGYWAERIGFLCDIRQVVFNPNLFPYENMEGKIDRPEEYADIATKCVTNFREKNRDRCLVILSRHDEALDSQRSAQALHPYYEIVWDEEQTHKFKNISPHLQRIKAFKTLG</sequence>
<proteinExistence type="inferred from homology"/>
<dbReference type="EMBL" id="CP000886">
    <property type="protein sequence ID" value="ABX67695.1"/>
    <property type="molecule type" value="Genomic_DNA"/>
</dbReference>
<dbReference type="RefSeq" id="WP_000587945.1">
    <property type="nucleotide sequence ID" value="NC_010102.1"/>
</dbReference>
<dbReference type="SMR" id="A9N5J5"/>
<dbReference type="ESTHER" id="salty-ycfp">
    <property type="family name" value="abh_upf00227"/>
</dbReference>
<dbReference type="KEGG" id="spq:SPAB_02312"/>
<dbReference type="PATRIC" id="fig|1016998.12.peg.2187"/>
<dbReference type="HOGENOM" id="CLU_128769_0_0_6"/>
<dbReference type="BioCyc" id="SENT1016998:SPAB_RS09400-MONOMER"/>
<dbReference type="Proteomes" id="UP000008556">
    <property type="component" value="Chromosome"/>
</dbReference>
<dbReference type="FunFam" id="3.40.50.1820:FF:000007">
    <property type="entry name" value="UPF0227 protein YcfP"/>
    <property type="match status" value="1"/>
</dbReference>
<dbReference type="Gene3D" id="3.40.50.1820">
    <property type="entry name" value="alpha/beta hydrolase"/>
    <property type="match status" value="1"/>
</dbReference>
<dbReference type="HAMAP" id="MF_01047">
    <property type="entry name" value="UPF0227"/>
    <property type="match status" value="1"/>
</dbReference>
<dbReference type="InterPro" id="IPR029058">
    <property type="entry name" value="AB_hydrolase_fold"/>
</dbReference>
<dbReference type="InterPro" id="IPR022987">
    <property type="entry name" value="UPF0227"/>
</dbReference>
<dbReference type="InterPro" id="IPR008886">
    <property type="entry name" value="UPF0227/Esterase_YqiA"/>
</dbReference>
<dbReference type="NCBIfam" id="NF003431">
    <property type="entry name" value="PRK04940.1"/>
    <property type="match status" value="1"/>
</dbReference>
<dbReference type="PANTHER" id="PTHR35602">
    <property type="entry name" value="ESTERASE YQIA-RELATED"/>
    <property type="match status" value="1"/>
</dbReference>
<dbReference type="PANTHER" id="PTHR35602:SF2">
    <property type="entry name" value="UPF0227 PROTEIN YCFP"/>
    <property type="match status" value="1"/>
</dbReference>
<dbReference type="Pfam" id="PF05728">
    <property type="entry name" value="UPF0227"/>
    <property type="match status" value="1"/>
</dbReference>
<dbReference type="SUPFAM" id="SSF53474">
    <property type="entry name" value="alpha/beta-Hydrolases"/>
    <property type="match status" value="1"/>
</dbReference>
<evidence type="ECO:0000255" key="1">
    <source>
        <dbReference type="HAMAP-Rule" id="MF_01047"/>
    </source>
</evidence>
<gene>
    <name evidence="1" type="primary">ycfP</name>
    <name type="ordered locus">SPAB_02312</name>
</gene>
<organism>
    <name type="scientific">Salmonella paratyphi B (strain ATCC BAA-1250 / SPB7)</name>
    <dbReference type="NCBI Taxonomy" id="1016998"/>
    <lineage>
        <taxon>Bacteria</taxon>
        <taxon>Pseudomonadati</taxon>
        <taxon>Pseudomonadota</taxon>
        <taxon>Gammaproteobacteria</taxon>
        <taxon>Enterobacterales</taxon>
        <taxon>Enterobacteriaceae</taxon>
        <taxon>Salmonella</taxon>
    </lineage>
</organism>
<feature type="chain" id="PRO_1000084415" description="UPF0227 protein YcfP">
    <location>
        <begin position="1"/>
        <end position="180"/>
    </location>
</feature>
<comment type="similarity">
    <text evidence="1">Belongs to the UPF0227 family.</text>
</comment>
<name>YCFP_SALPB</name>